<evidence type="ECO:0000256" key="1">
    <source>
        <dbReference type="SAM" id="MobiDB-lite"/>
    </source>
</evidence>
<evidence type="ECO:0000305" key="2"/>
<name>CUDP_METCM</name>
<comment type="function">
    <text>Capable of breaching the insect cuticle.</text>
</comment>
<comment type="subcellular location">
    <subcellularLocation>
        <location>Secreted</location>
    </subcellularLocation>
</comment>
<comment type="similarity">
    <text evidence="2">Belongs to the peptidase S8 family.</text>
</comment>
<dbReference type="EC" id="3.4.21.-"/>
<dbReference type="GO" id="GO:0005576">
    <property type="term" value="C:extracellular region"/>
    <property type="evidence" value="ECO:0007669"/>
    <property type="project" value="UniProtKB-SubCell"/>
</dbReference>
<dbReference type="GO" id="GO:0008236">
    <property type="term" value="F:serine-type peptidase activity"/>
    <property type="evidence" value="ECO:0007669"/>
    <property type="project" value="UniProtKB-KW"/>
</dbReference>
<dbReference type="GO" id="GO:0006508">
    <property type="term" value="P:proteolysis"/>
    <property type="evidence" value="ECO:0007669"/>
    <property type="project" value="UniProtKB-KW"/>
</dbReference>
<sequence>AIVEQQGAPXGLGRIINKXK</sequence>
<keyword id="KW-0903">Direct protein sequencing</keyword>
<keyword id="KW-0378">Hydrolase</keyword>
<keyword id="KW-0645">Protease</keyword>
<keyword id="KW-0964">Secreted</keyword>
<keyword id="KW-0720">Serine protease</keyword>
<feature type="chain" id="PRO_0000076407" description="Cuticle-degrading protease-like protein">
    <location>
        <begin position="1"/>
        <end position="20" status="greater than"/>
    </location>
</feature>
<feature type="region of interest" description="Disordered" evidence="1">
    <location>
        <begin position="1"/>
        <end position="20"/>
    </location>
</feature>
<feature type="non-terminal residue">
    <location>
        <position position="20"/>
    </location>
</feature>
<organism>
    <name type="scientific">Metacordyceps chlamydosporia</name>
    <name type="common">Nematophagous fungus</name>
    <name type="synonym">Pochonia chlamydosporia</name>
    <dbReference type="NCBI Taxonomy" id="280754"/>
    <lineage>
        <taxon>Eukaryota</taxon>
        <taxon>Fungi</taxon>
        <taxon>Dikarya</taxon>
        <taxon>Ascomycota</taxon>
        <taxon>Pezizomycotina</taxon>
        <taxon>Sordariomycetes</taxon>
        <taxon>Hypocreomycetidae</taxon>
        <taxon>Hypocreales</taxon>
        <taxon>Clavicipitaceae</taxon>
        <taxon>Pochonia</taxon>
    </lineage>
</organism>
<proteinExistence type="evidence at protein level"/>
<protein>
    <recommendedName>
        <fullName>Cuticle-degrading protease-like protein</fullName>
        <ecNumber>3.4.21.-</ecNumber>
    </recommendedName>
    <alternativeName>
        <fullName>Chymoelastase</fullName>
    </alternativeName>
</protein>
<accession>P80406</accession>
<reference key="1">
    <citation type="journal article" date="1995" name="FEMS Microbiol. Lett.">
        <title>The subtilisins of the invertebrate mycopathogens Verticillium chlamydosporium and Metarhizium anisopliae are serologically and functionally related.</title>
        <authorList>
            <person name="Segers R."/>
            <person name="Butt T.M."/>
            <person name="Keen J.N."/>
            <person name="Kerry B.R."/>
            <person name="Peberdy J.F."/>
        </authorList>
    </citation>
    <scope>PROTEIN SEQUENCE</scope>
    <source>
        <strain>VC10</strain>
    </source>
</reference>